<feature type="chain" id="PRO_1000164582" description="Orotidine 5'-phosphate decarboxylase">
    <location>
        <begin position="1"/>
        <end position="230"/>
    </location>
</feature>
<feature type="active site" description="Proton donor" evidence="1">
    <location>
        <position position="63"/>
    </location>
</feature>
<feature type="binding site" evidence="1">
    <location>
        <position position="11"/>
    </location>
    <ligand>
        <name>substrate</name>
    </ligand>
</feature>
<feature type="binding site" evidence="1">
    <location>
        <position position="34"/>
    </location>
    <ligand>
        <name>substrate</name>
    </ligand>
</feature>
<feature type="binding site" evidence="1">
    <location>
        <begin position="61"/>
        <end position="70"/>
    </location>
    <ligand>
        <name>substrate</name>
    </ligand>
</feature>
<feature type="binding site" evidence="1">
    <location>
        <position position="117"/>
    </location>
    <ligand>
        <name>substrate</name>
    </ligand>
</feature>
<feature type="binding site" evidence="1">
    <location>
        <position position="179"/>
    </location>
    <ligand>
        <name>substrate</name>
    </ligand>
</feature>
<feature type="binding site" evidence="1">
    <location>
        <position position="188"/>
    </location>
    <ligand>
        <name>substrate</name>
    </ligand>
</feature>
<feature type="binding site" evidence="1">
    <location>
        <position position="208"/>
    </location>
    <ligand>
        <name>substrate</name>
    </ligand>
</feature>
<feature type="binding site" evidence="1">
    <location>
        <position position="209"/>
    </location>
    <ligand>
        <name>substrate</name>
    </ligand>
</feature>
<protein>
    <recommendedName>
        <fullName evidence="1">Orotidine 5'-phosphate decarboxylase</fullName>
        <ecNumber evidence="1">4.1.1.23</ecNumber>
    </recommendedName>
    <alternativeName>
        <fullName evidence="1">OMP decarboxylase</fullName>
        <shortName evidence="1">OMPDCase</shortName>
        <shortName evidence="1">OMPdecase</shortName>
    </alternativeName>
</protein>
<organism>
    <name type="scientific">Streptococcus uberis (strain ATCC BAA-854 / 0140J)</name>
    <dbReference type="NCBI Taxonomy" id="218495"/>
    <lineage>
        <taxon>Bacteria</taxon>
        <taxon>Bacillati</taxon>
        <taxon>Bacillota</taxon>
        <taxon>Bacilli</taxon>
        <taxon>Lactobacillales</taxon>
        <taxon>Streptococcaceae</taxon>
        <taxon>Streptococcus</taxon>
    </lineage>
</organism>
<sequence>MREQRPIIALDFPDFDTLKDFLNQFPKDEALYVKIGMELYYAVGPEIVRYVKSLGHSVFLDLKLHDIPNTVKSTMKVLAKMGIDMTTVQAAGGVEMLEAAREGLGDDPILIAVTQLTSTSEEQMREDQNIQTTLTESVLHYAKRTALAKLDGVVCSAHEVEAIKSVTSKDFLCLTPGIRPKGTDIGDQKRVMTPQEAKAIGSDFIVVGRPITQAPDPLAAYHAIKADWNA</sequence>
<accession>B9DUH9</accession>
<reference key="1">
    <citation type="journal article" date="2009" name="BMC Genomics">
        <title>Evidence for niche adaptation in the genome of the bovine pathogen Streptococcus uberis.</title>
        <authorList>
            <person name="Ward P.N."/>
            <person name="Holden M.T.G."/>
            <person name="Leigh J.A."/>
            <person name="Lennard N."/>
            <person name="Bignell A."/>
            <person name="Barron A."/>
            <person name="Clark L."/>
            <person name="Quail M.A."/>
            <person name="Woodward J."/>
            <person name="Barrell B.G."/>
            <person name="Egan S.A."/>
            <person name="Field T.R."/>
            <person name="Maskell D."/>
            <person name="Kehoe M."/>
            <person name="Dowson C.G."/>
            <person name="Chanter N."/>
            <person name="Whatmore A.M."/>
            <person name="Bentley S.D."/>
            <person name="Parkhill J."/>
        </authorList>
    </citation>
    <scope>NUCLEOTIDE SEQUENCE [LARGE SCALE GENOMIC DNA]</scope>
    <source>
        <strain>ATCC BAA-854 / 0140J</strain>
    </source>
</reference>
<evidence type="ECO:0000255" key="1">
    <source>
        <dbReference type="HAMAP-Rule" id="MF_01200"/>
    </source>
</evidence>
<proteinExistence type="inferred from homology"/>
<dbReference type="EC" id="4.1.1.23" evidence="1"/>
<dbReference type="EMBL" id="AM946015">
    <property type="protein sequence ID" value="CAR42289.1"/>
    <property type="molecule type" value="Genomic_DNA"/>
</dbReference>
<dbReference type="RefSeq" id="WP_012658522.1">
    <property type="nucleotide sequence ID" value="NC_012004.1"/>
</dbReference>
<dbReference type="SMR" id="B9DUH9"/>
<dbReference type="STRING" id="218495.SUB1025"/>
<dbReference type="KEGG" id="sub:SUB1025"/>
<dbReference type="eggNOG" id="COG0284">
    <property type="taxonomic scope" value="Bacteria"/>
</dbReference>
<dbReference type="HOGENOM" id="CLU_067069_1_1_9"/>
<dbReference type="OrthoDB" id="9806203at2"/>
<dbReference type="UniPathway" id="UPA00070">
    <property type="reaction ID" value="UER00120"/>
</dbReference>
<dbReference type="Proteomes" id="UP000000449">
    <property type="component" value="Chromosome"/>
</dbReference>
<dbReference type="GO" id="GO:0005829">
    <property type="term" value="C:cytosol"/>
    <property type="evidence" value="ECO:0007669"/>
    <property type="project" value="TreeGrafter"/>
</dbReference>
<dbReference type="GO" id="GO:0004590">
    <property type="term" value="F:orotidine-5'-phosphate decarboxylase activity"/>
    <property type="evidence" value="ECO:0007669"/>
    <property type="project" value="UniProtKB-UniRule"/>
</dbReference>
<dbReference type="GO" id="GO:0006207">
    <property type="term" value="P:'de novo' pyrimidine nucleobase biosynthetic process"/>
    <property type="evidence" value="ECO:0007669"/>
    <property type="project" value="InterPro"/>
</dbReference>
<dbReference type="GO" id="GO:0044205">
    <property type="term" value="P:'de novo' UMP biosynthetic process"/>
    <property type="evidence" value="ECO:0007669"/>
    <property type="project" value="UniProtKB-UniRule"/>
</dbReference>
<dbReference type="CDD" id="cd04725">
    <property type="entry name" value="OMP_decarboxylase_like"/>
    <property type="match status" value="1"/>
</dbReference>
<dbReference type="FunFam" id="3.20.20.70:FF:000015">
    <property type="entry name" value="Orotidine 5'-phosphate decarboxylase"/>
    <property type="match status" value="1"/>
</dbReference>
<dbReference type="Gene3D" id="3.20.20.70">
    <property type="entry name" value="Aldolase class I"/>
    <property type="match status" value="1"/>
</dbReference>
<dbReference type="HAMAP" id="MF_01200_B">
    <property type="entry name" value="OMPdecase_type1_B"/>
    <property type="match status" value="1"/>
</dbReference>
<dbReference type="InterPro" id="IPR013785">
    <property type="entry name" value="Aldolase_TIM"/>
</dbReference>
<dbReference type="InterPro" id="IPR014732">
    <property type="entry name" value="OMPdecase"/>
</dbReference>
<dbReference type="InterPro" id="IPR018089">
    <property type="entry name" value="OMPdecase_AS"/>
</dbReference>
<dbReference type="InterPro" id="IPR047596">
    <property type="entry name" value="OMPdecase_bac"/>
</dbReference>
<dbReference type="InterPro" id="IPR001754">
    <property type="entry name" value="OMPdeCOase_dom"/>
</dbReference>
<dbReference type="InterPro" id="IPR011060">
    <property type="entry name" value="RibuloseP-bd_barrel"/>
</dbReference>
<dbReference type="NCBIfam" id="NF001273">
    <property type="entry name" value="PRK00230.1"/>
    <property type="match status" value="1"/>
</dbReference>
<dbReference type="NCBIfam" id="TIGR01740">
    <property type="entry name" value="pyrF"/>
    <property type="match status" value="1"/>
</dbReference>
<dbReference type="PANTHER" id="PTHR32119">
    <property type="entry name" value="OROTIDINE 5'-PHOSPHATE DECARBOXYLASE"/>
    <property type="match status" value="1"/>
</dbReference>
<dbReference type="PANTHER" id="PTHR32119:SF2">
    <property type="entry name" value="OROTIDINE 5'-PHOSPHATE DECARBOXYLASE"/>
    <property type="match status" value="1"/>
</dbReference>
<dbReference type="Pfam" id="PF00215">
    <property type="entry name" value="OMPdecase"/>
    <property type="match status" value="1"/>
</dbReference>
<dbReference type="SMART" id="SM00934">
    <property type="entry name" value="OMPdecase"/>
    <property type="match status" value="1"/>
</dbReference>
<dbReference type="SUPFAM" id="SSF51366">
    <property type="entry name" value="Ribulose-phoshate binding barrel"/>
    <property type="match status" value="1"/>
</dbReference>
<dbReference type="PROSITE" id="PS00156">
    <property type="entry name" value="OMPDECASE"/>
    <property type="match status" value="1"/>
</dbReference>
<keyword id="KW-0210">Decarboxylase</keyword>
<keyword id="KW-0456">Lyase</keyword>
<keyword id="KW-0665">Pyrimidine biosynthesis</keyword>
<keyword id="KW-1185">Reference proteome</keyword>
<gene>
    <name evidence="1" type="primary">pyrF</name>
    <name type="ordered locus">SUB1025</name>
</gene>
<name>PYRF_STRU0</name>
<comment type="function">
    <text evidence="1">Catalyzes the decarboxylation of orotidine 5'-monophosphate (OMP) to uridine 5'-monophosphate (UMP).</text>
</comment>
<comment type="catalytic activity">
    <reaction evidence="1">
        <text>orotidine 5'-phosphate + H(+) = UMP + CO2</text>
        <dbReference type="Rhea" id="RHEA:11596"/>
        <dbReference type="ChEBI" id="CHEBI:15378"/>
        <dbReference type="ChEBI" id="CHEBI:16526"/>
        <dbReference type="ChEBI" id="CHEBI:57538"/>
        <dbReference type="ChEBI" id="CHEBI:57865"/>
        <dbReference type="EC" id="4.1.1.23"/>
    </reaction>
</comment>
<comment type="pathway">
    <text evidence="1">Pyrimidine metabolism; UMP biosynthesis via de novo pathway; UMP from orotate: step 2/2.</text>
</comment>
<comment type="subunit">
    <text evidence="1">Homodimer.</text>
</comment>
<comment type="similarity">
    <text evidence="1">Belongs to the OMP decarboxylase family. Type 1 subfamily.</text>
</comment>